<name>MRGBP_MOUSE</name>
<reference key="1">
    <citation type="journal article" date="2005" name="Science">
        <title>The transcriptional landscape of the mammalian genome.</title>
        <authorList>
            <person name="Carninci P."/>
            <person name="Kasukawa T."/>
            <person name="Katayama S."/>
            <person name="Gough J."/>
            <person name="Frith M.C."/>
            <person name="Maeda N."/>
            <person name="Oyama R."/>
            <person name="Ravasi T."/>
            <person name="Lenhard B."/>
            <person name="Wells C."/>
            <person name="Kodzius R."/>
            <person name="Shimokawa K."/>
            <person name="Bajic V.B."/>
            <person name="Brenner S.E."/>
            <person name="Batalov S."/>
            <person name="Forrest A.R."/>
            <person name="Zavolan M."/>
            <person name="Davis M.J."/>
            <person name="Wilming L.G."/>
            <person name="Aidinis V."/>
            <person name="Allen J.E."/>
            <person name="Ambesi-Impiombato A."/>
            <person name="Apweiler R."/>
            <person name="Aturaliya R.N."/>
            <person name="Bailey T.L."/>
            <person name="Bansal M."/>
            <person name="Baxter L."/>
            <person name="Beisel K.W."/>
            <person name="Bersano T."/>
            <person name="Bono H."/>
            <person name="Chalk A.M."/>
            <person name="Chiu K.P."/>
            <person name="Choudhary V."/>
            <person name="Christoffels A."/>
            <person name="Clutterbuck D.R."/>
            <person name="Crowe M.L."/>
            <person name="Dalla E."/>
            <person name="Dalrymple B.P."/>
            <person name="de Bono B."/>
            <person name="Della Gatta G."/>
            <person name="di Bernardo D."/>
            <person name="Down T."/>
            <person name="Engstrom P."/>
            <person name="Fagiolini M."/>
            <person name="Faulkner G."/>
            <person name="Fletcher C.F."/>
            <person name="Fukushima T."/>
            <person name="Furuno M."/>
            <person name="Futaki S."/>
            <person name="Gariboldi M."/>
            <person name="Georgii-Hemming P."/>
            <person name="Gingeras T.R."/>
            <person name="Gojobori T."/>
            <person name="Green R.E."/>
            <person name="Gustincich S."/>
            <person name="Harbers M."/>
            <person name="Hayashi Y."/>
            <person name="Hensch T.K."/>
            <person name="Hirokawa N."/>
            <person name="Hill D."/>
            <person name="Huminiecki L."/>
            <person name="Iacono M."/>
            <person name="Ikeo K."/>
            <person name="Iwama A."/>
            <person name="Ishikawa T."/>
            <person name="Jakt M."/>
            <person name="Kanapin A."/>
            <person name="Katoh M."/>
            <person name="Kawasawa Y."/>
            <person name="Kelso J."/>
            <person name="Kitamura H."/>
            <person name="Kitano H."/>
            <person name="Kollias G."/>
            <person name="Krishnan S.P."/>
            <person name="Kruger A."/>
            <person name="Kummerfeld S.K."/>
            <person name="Kurochkin I.V."/>
            <person name="Lareau L.F."/>
            <person name="Lazarevic D."/>
            <person name="Lipovich L."/>
            <person name="Liu J."/>
            <person name="Liuni S."/>
            <person name="McWilliam S."/>
            <person name="Madan Babu M."/>
            <person name="Madera M."/>
            <person name="Marchionni L."/>
            <person name="Matsuda H."/>
            <person name="Matsuzawa S."/>
            <person name="Miki H."/>
            <person name="Mignone F."/>
            <person name="Miyake S."/>
            <person name="Morris K."/>
            <person name="Mottagui-Tabar S."/>
            <person name="Mulder N."/>
            <person name="Nakano N."/>
            <person name="Nakauchi H."/>
            <person name="Ng P."/>
            <person name="Nilsson R."/>
            <person name="Nishiguchi S."/>
            <person name="Nishikawa S."/>
            <person name="Nori F."/>
            <person name="Ohara O."/>
            <person name="Okazaki Y."/>
            <person name="Orlando V."/>
            <person name="Pang K.C."/>
            <person name="Pavan W.J."/>
            <person name="Pavesi G."/>
            <person name="Pesole G."/>
            <person name="Petrovsky N."/>
            <person name="Piazza S."/>
            <person name="Reed J."/>
            <person name="Reid J.F."/>
            <person name="Ring B.Z."/>
            <person name="Ringwald M."/>
            <person name="Rost B."/>
            <person name="Ruan Y."/>
            <person name="Salzberg S.L."/>
            <person name="Sandelin A."/>
            <person name="Schneider C."/>
            <person name="Schoenbach C."/>
            <person name="Sekiguchi K."/>
            <person name="Semple C.A."/>
            <person name="Seno S."/>
            <person name="Sessa L."/>
            <person name="Sheng Y."/>
            <person name="Shibata Y."/>
            <person name="Shimada H."/>
            <person name="Shimada K."/>
            <person name="Silva D."/>
            <person name="Sinclair B."/>
            <person name="Sperling S."/>
            <person name="Stupka E."/>
            <person name="Sugiura K."/>
            <person name="Sultana R."/>
            <person name="Takenaka Y."/>
            <person name="Taki K."/>
            <person name="Tammoja K."/>
            <person name="Tan S.L."/>
            <person name="Tang S."/>
            <person name="Taylor M.S."/>
            <person name="Tegner J."/>
            <person name="Teichmann S.A."/>
            <person name="Ueda H.R."/>
            <person name="van Nimwegen E."/>
            <person name="Verardo R."/>
            <person name="Wei C.L."/>
            <person name="Yagi K."/>
            <person name="Yamanishi H."/>
            <person name="Zabarovsky E."/>
            <person name="Zhu S."/>
            <person name="Zimmer A."/>
            <person name="Hide W."/>
            <person name="Bult C."/>
            <person name="Grimmond S.M."/>
            <person name="Teasdale R.D."/>
            <person name="Liu E.T."/>
            <person name="Brusic V."/>
            <person name="Quackenbush J."/>
            <person name="Wahlestedt C."/>
            <person name="Mattick J.S."/>
            <person name="Hume D.A."/>
            <person name="Kai C."/>
            <person name="Sasaki D."/>
            <person name="Tomaru Y."/>
            <person name="Fukuda S."/>
            <person name="Kanamori-Katayama M."/>
            <person name="Suzuki M."/>
            <person name="Aoki J."/>
            <person name="Arakawa T."/>
            <person name="Iida J."/>
            <person name="Imamura K."/>
            <person name="Itoh M."/>
            <person name="Kato T."/>
            <person name="Kawaji H."/>
            <person name="Kawagashira N."/>
            <person name="Kawashima T."/>
            <person name="Kojima M."/>
            <person name="Kondo S."/>
            <person name="Konno H."/>
            <person name="Nakano K."/>
            <person name="Ninomiya N."/>
            <person name="Nishio T."/>
            <person name="Okada M."/>
            <person name="Plessy C."/>
            <person name="Shibata K."/>
            <person name="Shiraki T."/>
            <person name="Suzuki S."/>
            <person name="Tagami M."/>
            <person name="Waki K."/>
            <person name="Watahiki A."/>
            <person name="Okamura-Oho Y."/>
            <person name="Suzuki H."/>
            <person name="Kawai J."/>
            <person name="Hayashizaki Y."/>
        </authorList>
    </citation>
    <scope>NUCLEOTIDE SEQUENCE [LARGE SCALE MRNA] (ISOFORMS 1 AND 2)</scope>
    <source>
        <strain>C57BL/6J</strain>
        <tissue>Placenta</tissue>
        <tissue>Stomach</tissue>
    </source>
</reference>
<reference key="2">
    <citation type="journal article" date="2009" name="PLoS Biol.">
        <title>Lineage-specific biology revealed by a finished genome assembly of the mouse.</title>
        <authorList>
            <person name="Church D.M."/>
            <person name="Goodstadt L."/>
            <person name="Hillier L.W."/>
            <person name="Zody M.C."/>
            <person name="Goldstein S."/>
            <person name="She X."/>
            <person name="Bult C.J."/>
            <person name="Agarwala R."/>
            <person name="Cherry J.L."/>
            <person name="DiCuccio M."/>
            <person name="Hlavina W."/>
            <person name="Kapustin Y."/>
            <person name="Meric P."/>
            <person name="Maglott D."/>
            <person name="Birtle Z."/>
            <person name="Marques A.C."/>
            <person name="Graves T."/>
            <person name="Zhou S."/>
            <person name="Teague B."/>
            <person name="Potamousis K."/>
            <person name="Churas C."/>
            <person name="Place M."/>
            <person name="Herschleb J."/>
            <person name="Runnheim R."/>
            <person name="Forrest D."/>
            <person name="Amos-Landgraf J."/>
            <person name="Schwartz D.C."/>
            <person name="Cheng Z."/>
            <person name="Lindblad-Toh K."/>
            <person name="Eichler E.E."/>
            <person name="Ponting C.P."/>
        </authorList>
    </citation>
    <scope>NUCLEOTIDE SEQUENCE [LARGE SCALE GENOMIC DNA]</scope>
    <source>
        <strain>C57BL/6J</strain>
    </source>
</reference>
<reference key="3">
    <citation type="submission" date="2005-07" db="EMBL/GenBank/DDBJ databases">
        <authorList>
            <person name="Mural R.J."/>
            <person name="Adams M.D."/>
            <person name="Myers E.W."/>
            <person name="Smith H.O."/>
            <person name="Venter J.C."/>
        </authorList>
    </citation>
    <scope>NUCLEOTIDE SEQUENCE [LARGE SCALE GENOMIC DNA]</scope>
</reference>
<reference key="4">
    <citation type="journal article" date="2004" name="Genome Res.">
        <title>The status, quality, and expansion of the NIH full-length cDNA project: the Mammalian Gene Collection (MGC).</title>
        <authorList>
            <consortium name="The MGC Project Team"/>
        </authorList>
    </citation>
    <scope>NUCLEOTIDE SEQUENCE [LARGE SCALE MRNA]</scope>
    <source>
        <tissue>Brain</tissue>
    </source>
</reference>
<reference key="5">
    <citation type="journal article" date="2010" name="Cell">
        <title>A tissue-specific atlas of mouse protein phosphorylation and expression.</title>
        <authorList>
            <person name="Huttlin E.L."/>
            <person name="Jedrychowski M.P."/>
            <person name="Elias J.E."/>
            <person name="Goswami T."/>
            <person name="Rad R."/>
            <person name="Beausoleil S.A."/>
            <person name="Villen J."/>
            <person name="Haas W."/>
            <person name="Sowa M.E."/>
            <person name="Gygi S.P."/>
        </authorList>
    </citation>
    <scope>PHOSPHORYLATION [LARGE SCALE ANALYSIS] AT SER-191 AND SER-195</scope>
    <scope>IDENTIFICATION BY MASS SPECTROMETRY [LARGE SCALE ANALYSIS]</scope>
    <source>
        <tissue>Brain</tissue>
        <tissue>Brown adipose tissue</tissue>
        <tissue>Kidney</tissue>
        <tissue>Lung</tissue>
        <tissue>Spleen</tissue>
        <tissue>Testis</tissue>
    </source>
</reference>
<feature type="initiator methionine" description="Removed" evidence="2">
    <location>
        <position position="1"/>
    </location>
</feature>
<feature type="chain" id="PRO_0000215877" description="MRG/MORF4L-binding protein">
    <location>
        <begin position="2"/>
        <end position="204"/>
    </location>
</feature>
<feature type="region of interest" description="Disordered" evidence="3">
    <location>
        <begin position="1"/>
        <end position="27"/>
    </location>
</feature>
<feature type="region of interest" description="Disordered" evidence="3">
    <location>
        <begin position="128"/>
        <end position="204"/>
    </location>
</feature>
<feature type="compositionally biased region" description="Gly residues" evidence="3">
    <location>
        <begin position="1"/>
        <end position="15"/>
    </location>
</feature>
<feature type="compositionally biased region" description="Basic and acidic residues" evidence="3">
    <location>
        <begin position="128"/>
        <end position="140"/>
    </location>
</feature>
<feature type="compositionally biased region" description="Basic and acidic residues" evidence="3">
    <location>
        <begin position="153"/>
        <end position="175"/>
    </location>
</feature>
<feature type="compositionally biased region" description="Low complexity" evidence="3">
    <location>
        <begin position="189"/>
        <end position="198"/>
    </location>
</feature>
<feature type="modified residue" description="N-acetylglycine" evidence="2">
    <location>
        <position position="2"/>
    </location>
</feature>
<feature type="modified residue" description="Phosphoserine" evidence="2">
    <location>
        <position position="23"/>
    </location>
</feature>
<feature type="modified residue" description="Phosphoserine" evidence="6">
    <location>
        <position position="191"/>
    </location>
</feature>
<feature type="modified residue" description="Phosphoserine" evidence="6">
    <location>
        <position position="195"/>
    </location>
</feature>
<feature type="cross-link" description="Glycyl lysine isopeptide (Lys-Gly) (interchain with G-Cter in SUMO2)" evidence="2">
    <location>
        <position position="127"/>
    </location>
</feature>
<feature type="splice variant" id="VSP_003793" description="In isoform 2." evidence="4">
    <original>KVVIEEEMKEEMKEDVDPHSGADDVFSSSGSLGKALEKSSKDKEKNSSDLGCKEGADKRKRSRVTDKVLTANSNPSSPSAAKRRRT</original>
    <variation>ETRPPPGLGIKKASPGQRWGGLGPPGRCKDPAQTIPPVAPGRFWEPRAGESGAQRQSPDGCRLVMDAEACVGSENRKQSWPDRPPALATTVGFQ</variation>
    <location>
        <begin position="119"/>
        <end position="204"/>
    </location>
</feature>
<feature type="sequence conflict" description="In Ref. 1; BAC35046." evidence="5" ref="1">
    <original>P</original>
    <variation>S</variation>
    <location>
        <position position="22"/>
    </location>
</feature>
<feature type="sequence conflict" description="In Ref. 1; BAC35046." evidence="5" ref="1">
    <original>E</original>
    <variation>D</variation>
    <location>
        <position position="110"/>
    </location>
</feature>
<feature type="sequence conflict" description="In Ref. 1; BAB24117." evidence="5" ref="1">
    <original>K</original>
    <variation>E</variation>
    <location>
        <position position="156"/>
    </location>
</feature>
<comment type="function">
    <text>Component of the NuA4 histone acetyltransferase (HAT) complex which is involved in transcriptional activation of select genes principally by acetylation of nucleosomal histones H4 and H2A. This modification may both alter nucleosome - DNA interactions and promote interaction of the modified histones with other proteins which positively regulate transcription. This complex may be required for the activation of transcriptional programs associated with oncogene and proto-oncogene mediated growth induction, tumor suppressor mediated growth arrest and replicative senescence, apoptosis, and DNA repair. NuA4 may also play a direct role in DNA repair when recruited to sites of DNA damage.</text>
</comment>
<comment type="subunit">
    <text evidence="1">Component of the NuA4 histone acetyltransferase complex which contains the catalytic subunit KAT5/TIP60 and the subunits EP400, TRRAP/PAF400, BRD8/SMAP, EPC1, DMAP1/DNMAP1, RUVBL1/TIP49, RUVBL2, ING3, actin, ACTL6A/BAF53A, MORF4L1/MRG15, MORF4L2/MRGX, MRGBP, YEATS4/GAS41, VPS72/YL1 and MEAF6. MRGBP may interact directly with MORF4L1/MRG15 and MORF4L2/MRGX (By similarity).</text>
</comment>
<comment type="subcellular location">
    <subcellularLocation>
        <location evidence="1">Nucleus</location>
    </subcellularLocation>
</comment>
<comment type="alternative products">
    <event type="alternative splicing"/>
    <isoform>
        <id>Q9DAT2-1</id>
        <name>1</name>
        <sequence type="displayed"/>
    </isoform>
    <isoform>
        <id>Q9DAT2-2</id>
        <name>2</name>
        <sequence type="described" ref="VSP_003793"/>
    </isoform>
</comment>
<comment type="similarity">
    <text evidence="5">Belongs to the EAF7 family.</text>
</comment>
<comment type="sequence caution" evidence="5">
    <conflict type="frameshift">
        <sequence resource="EMBL-CDS" id="BAB24117"/>
    </conflict>
</comment>
<proteinExistence type="evidence at protein level"/>
<gene>
    <name type="primary">Mrgbp</name>
</gene>
<protein>
    <recommendedName>
        <fullName>MRG/MORF4L-binding protein</fullName>
    </recommendedName>
    <alternativeName>
        <fullName>MRG-binding protein</fullName>
    </alternativeName>
</protein>
<dbReference type="EMBL" id="AK005551">
    <property type="protein sequence ID" value="BAB24117.1"/>
    <property type="status" value="ALT_FRAME"/>
    <property type="molecule type" value="mRNA"/>
</dbReference>
<dbReference type="EMBL" id="AK052575">
    <property type="protein sequence ID" value="BAC35046.1"/>
    <property type="molecule type" value="mRNA"/>
</dbReference>
<dbReference type="EMBL" id="AL669926">
    <property type="status" value="NOT_ANNOTATED_CDS"/>
    <property type="molecule type" value="Genomic_DNA"/>
</dbReference>
<dbReference type="EMBL" id="CH466626">
    <property type="protein sequence ID" value="EDL07342.1"/>
    <property type="molecule type" value="Genomic_DNA"/>
</dbReference>
<dbReference type="EMBL" id="BC116732">
    <property type="protein sequence ID" value="AAI16733.1"/>
    <property type="molecule type" value="mRNA"/>
</dbReference>
<dbReference type="EMBL" id="BC116734">
    <property type="protein sequence ID" value="AAI16735.1"/>
    <property type="molecule type" value="mRNA"/>
</dbReference>
<dbReference type="CCDS" id="CCDS17178.1">
    <molecule id="Q9DAT2-1"/>
</dbReference>
<dbReference type="RefSeq" id="NP_082755.1">
    <molecule id="Q9DAT2-1"/>
    <property type="nucleotide sequence ID" value="NM_028479.2"/>
</dbReference>
<dbReference type="BioGRID" id="215861">
    <property type="interactions" value="5"/>
</dbReference>
<dbReference type="ComplexPortal" id="CPX-990">
    <property type="entry name" value="NuA4 histone acetyltransferase complex"/>
</dbReference>
<dbReference type="FunCoup" id="Q9DAT2">
    <property type="interactions" value="1752"/>
</dbReference>
<dbReference type="IntAct" id="Q9DAT2">
    <property type="interactions" value="2"/>
</dbReference>
<dbReference type="STRING" id="10090.ENSMUSP00000029085"/>
<dbReference type="iPTMnet" id="Q9DAT2"/>
<dbReference type="PhosphoSitePlus" id="Q9DAT2"/>
<dbReference type="jPOST" id="Q9DAT2"/>
<dbReference type="PaxDb" id="10090-ENSMUSP00000029085"/>
<dbReference type="PeptideAtlas" id="Q9DAT2"/>
<dbReference type="ProteomicsDB" id="290313">
    <molecule id="Q9DAT2-1"/>
</dbReference>
<dbReference type="ProteomicsDB" id="290314">
    <molecule id="Q9DAT2-2"/>
</dbReference>
<dbReference type="Pumba" id="Q9DAT2"/>
<dbReference type="Antibodypedia" id="14923">
    <property type="antibodies" value="172 antibodies from 25 providers"/>
</dbReference>
<dbReference type="Ensembl" id="ENSMUST00000029085.9">
    <molecule id="Q9DAT2-1"/>
    <property type="protein sequence ID" value="ENSMUSP00000029085.9"/>
    <property type="gene ID" value="ENSMUSG00000027569.16"/>
</dbReference>
<dbReference type="Ensembl" id="ENSMUST00000169630.8">
    <molecule id="Q9DAT2-1"/>
    <property type="protein sequence ID" value="ENSMUSP00000127747.2"/>
    <property type="gene ID" value="ENSMUSG00000027569.16"/>
</dbReference>
<dbReference type="GeneID" id="73247"/>
<dbReference type="KEGG" id="mmu:73247"/>
<dbReference type="UCSC" id="uc008ojh.1">
    <molecule id="Q9DAT2-1"/>
    <property type="organism name" value="mouse"/>
</dbReference>
<dbReference type="AGR" id="MGI:1920497"/>
<dbReference type="CTD" id="55257"/>
<dbReference type="MGI" id="MGI:1920497">
    <property type="gene designation" value="Mrgbp"/>
</dbReference>
<dbReference type="VEuPathDB" id="HostDB:ENSMUSG00000027569"/>
<dbReference type="eggNOG" id="KOG4051">
    <property type="taxonomic scope" value="Eukaryota"/>
</dbReference>
<dbReference type="GeneTree" id="ENSGT00390000007823"/>
<dbReference type="HOGENOM" id="CLU_080546_0_0_1"/>
<dbReference type="InParanoid" id="Q9DAT2"/>
<dbReference type="OMA" id="NREMPSD"/>
<dbReference type="OrthoDB" id="5595141at2759"/>
<dbReference type="PhylomeDB" id="Q9DAT2"/>
<dbReference type="TreeFam" id="TF326334"/>
<dbReference type="BioGRID-ORCS" id="73247">
    <property type="hits" value="14 hits in 81 CRISPR screens"/>
</dbReference>
<dbReference type="ChiTaRS" id="Mrgbp">
    <property type="organism name" value="mouse"/>
</dbReference>
<dbReference type="PRO" id="PR:Q9DAT2"/>
<dbReference type="Proteomes" id="UP000000589">
    <property type="component" value="Chromosome 2"/>
</dbReference>
<dbReference type="RNAct" id="Q9DAT2">
    <property type="molecule type" value="protein"/>
</dbReference>
<dbReference type="Bgee" id="ENSMUSG00000027569">
    <property type="expression patterns" value="Expressed in spermatocyte and 217 other cell types or tissues"/>
</dbReference>
<dbReference type="GO" id="GO:0035267">
    <property type="term" value="C:NuA4 histone acetyltransferase complex"/>
    <property type="evidence" value="ECO:0000266"/>
    <property type="project" value="ComplexPortal"/>
</dbReference>
<dbReference type="GO" id="GO:0005654">
    <property type="term" value="C:nucleoplasm"/>
    <property type="evidence" value="ECO:0007669"/>
    <property type="project" value="Ensembl"/>
</dbReference>
<dbReference type="GO" id="GO:0000786">
    <property type="term" value="C:nucleosome"/>
    <property type="evidence" value="ECO:0000266"/>
    <property type="project" value="ComplexPortal"/>
</dbReference>
<dbReference type="GO" id="GO:0006325">
    <property type="term" value="P:chromatin organization"/>
    <property type="evidence" value="ECO:0007669"/>
    <property type="project" value="UniProtKB-KW"/>
</dbReference>
<dbReference type="GO" id="GO:0045893">
    <property type="term" value="P:positive regulation of DNA-templated transcription"/>
    <property type="evidence" value="ECO:0000303"/>
    <property type="project" value="ComplexPortal"/>
</dbReference>
<dbReference type="GO" id="GO:1905168">
    <property type="term" value="P:positive regulation of double-strand break repair via homologous recombination"/>
    <property type="evidence" value="ECO:0000266"/>
    <property type="project" value="ComplexPortal"/>
</dbReference>
<dbReference type="GO" id="GO:0042981">
    <property type="term" value="P:regulation of apoptotic process"/>
    <property type="evidence" value="ECO:0000303"/>
    <property type="project" value="ComplexPortal"/>
</dbReference>
<dbReference type="GO" id="GO:0051726">
    <property type="term" value="P:regulation of cell cycle"/>
    <property type="evidence" value="ECO:0000266"/>
    <property type="project" value="ComplexPortal"/>
</dbReference>
<dbReference type="GO" id="GO:2000779">
    <property type="term" value="P:regulation of double-strand break repair"/>
    <property type="evidence" value="ECO:0000303"/>
    <property type="project" value="ComplexPortal"/>
</dbReference>
<dbReference type="InterPro" id="IPR012423">
    <property type="entry name" value="Eaf7/MRGBP"/>
</dbReference>
<dbReference type="PANTHER" id="PTHR13581">
    <property type="entry name" value="MRG-BINDING PROTEIN"/>
    <property type="match status" value="1"/>
</dbReference>
<dbReference type="PANTHER" id="PTHR13581:SF5">
    <property type="entry name" value="MRG_MORF4L-BINDING PROTEIN"/>
    <property type="match status" value="1"/>
</dbReference>
<dbReference type="Pfam" id="PF07904">
    <property type="entry name" value="Eaf7"/>
    <property type="match status" value="1"/>
</dbReference>
<evidence type="ECO:0000250" key="1"/>
<evidence type="ECO:0000250" key="2">
    <source>
        <dbReference type="UniProtKB" id="Q9NV56"/>
    </source>
</evidence>
<evidence type="ECO:0000256" key="3">
    <source>
        <dbReference type="SAM" id="MobiDB-lite"/>
    </source>
</evidence>
<evidence type="ECO:0000303" key="4">
    <source>
    </source>
</evidence>
<evidence type="ECO:0000305" key="5"/>
<evidence type="ECO:0007744" key="6">
    <source>
    </source>
</evidence>
<keyword id="KW-0007">Acetylation</keyword>
<keyword id="KW-0010">Activator</keyword>
<keyword id="KW-0025">Alternative splicing</keyword>
<keyword id="KW-0156">Chromatin regulator</keyword>
<keyword id="KW-0341">Growth regulation</keyword>
<keyword id="KW-1017">Isopeptide bond</keyword>
<keyword id="KW-0539">Nucleus</keyword>
<keyword id="KW-0597">Phosphoprotein</keyword>
<keyword id="KW-1185">Reference proteome</keyword>
<keyword id="KW-0804">Transcription</keyword>
<keyword id="KW-0805">Transcription regulation</keyword>
<keyword id="KW-0832">Ubl conjugation</keyword>
<organism>
    <name type="scientific">Mus musculus</name>
    <name type="common">Mouse</name>
    <dbReference type="NCBI Taxonomy" id="10090"/>
    <lineage>
        <taxon>Eukaryota</taxon>
        <taxon>Metazoa</taxon>
        <taxon>Chordata</taxon>
        <taxon>Craniata</taxon>
        <taxon>Vertebrata</taxon>
        <taxon>Euteleostomi</taxon>
        <taxon>Mammalia</taxon>
        <taxon>Eutheria</taxon>
        <taxon>Euarchontoglires</taxon>
        <taxon>Glires</taxon>
        <taxon>Rodentia</taxon>
        <taxon>Myomorpha</taxon>
        <taxon>Muroidea</taxon>
        <taxon>Muridae</taxon>
        <taxon>Murinae</taxon>
        <taxon>Mus</taxon>
        <taxon>Mus</taxon>
    </lineage>
</organism>
<sequence length="204" mass="22436">MGEAEVGGTGAPGDKGPGEAAPSPAEETVVWSPEVEVCLFHAMLGHKPVGVNRHFHMICIRDKFSQNIGRQVPSKVIWDHLSTMYDMQALHESEILPFPNPERNFVLPDEIIQEVREGKVVIEEEMKEEMKEDVDPHSGADDVFSSSGSLGKALEKSSKDKEKNSSDLGCKEGADKRKRSRVTDKVLTANSNPSSPSAAKRRRT</sequence>
<accession>Q9DAT2</accession>
<accession>Q14AR7</accession>